<dbReference type="EMBL" id="PVJO010000840">
    <property type="status" value="NOT_ANNOTATED_CDS"/>
    <property type="molecule type" value="Genomic_DNA"/>
</dbReference>
<dbReference type="SMR" id="P0DUZ2"/>
<dbReference type="GO" id="GO:0042627">
    <property type="term" value="C:chylomicron"/>
    <property type="evidence" value="ECO:0007669"/>
    <property type="project" value="UniProtKB-KW"/>
</dbReference>
<dbReference type="GO" id="GO:0070062">
    <property type="term" value="C:extracellular exosome"/>
    <property type="evidence" value="ECO:0000250"/>
    <property type="project" value="UniProtKB"/>
</dbReference>
<dbReference type="GO" id="GO:0034364">
    <property type="term" value="C:high-density lipoprotein particle"/>
    <property type="evidence" value="ECO:0007669"/>
    <property type="project" value="UniProtKB-KW"/>
</dbReference>
<dbReference type="GO" id="GO:0034362">
    <property type="term" value="C:low-density lipoprotein particle"/>
    <property type="evidence" value="ECO:0007669"/>
    <property type="project" value="TreeGrafter"/>
</dbReference>
<dbReference type="GO" id="GO:0097487">
    <property type="term" value="C:multivesicular body, internal vesicle"/>
    <property type="evidence" value="ECO:0000250"/>
    <property type="project" value="UniProtKB"/>
</dbReference>
<dbReference type="GO" id="GO:0034361">
    <property type="term" value="C:very-low-density lipoprotein particle"/>
    <property type="evidence" value="ECO:0007669"/>
    <property type="project" value="UniProtKB-KW"/>
</dbReference>
<dbReference type="GO" id="GO:0120020">
    <property type="term" value="F:cholesterol transfer activity"/>
    <property type="evidence" value="ECO:0007669"/>
    <property type="project" value="TreeGrafter"/>
</dbReference>
<dbReference type="GO" id="GO:0008201">
    <property type="term" value="F:heparin binding"/>
    <property type="evidence" value="ECO:0007669"/>
    <property type="project" value="UniProtKB-KW"/>
</dbReference>
<dbReference type="GO" id="GO:0060228">
    <property type="term" value="F:phosphatidylcholine-sterol O-acyltransferase activator activity"/>
    <property type="evidence" value="ECO:0007669"/>
    <property type="project" value="TreeGrafter"/>
</dbReference>
<dbReference type="GO" id="GO:0005543">
    <property type="term" value="F:phospholipid binding"/>
    <property type="evidence" value="ECO:0007669"/>
    <property type="project" value="TreeGrafter"/>
</dbReference>
<dbReference type="GO" id="GO:0055090">
    <property type="term" value="P:acylglycerol homeostasis"/>
    <property type="evidence" value="ECO:0007669"/>
    <property type="project" value="TreeGrafter"/>
</dbReference>
<dbReference type="GO" id="GO:0033344">
    <property type="term" value="P:cholesterol efflux"/>
    <property type="evidence" value="ECO:0007669"/>
    <property type="project" value="TreeGrafter"/>
</dbReference>
<dbReference type="GO" id="GO:0008203">
    <property type="term" value="P:cholesterol metabolic process"/>
    <property type="evidence" value="ECO:0007669"/>
    <property type="project" value="TreeGrafter"/>
</dbReference>
<dbReference type="GO" id="GO:0042157">
    <property type="term" value="P:lipoprotein metabolic process"/>
    <property type="evidence" value="ECO:0007669"/>
    <property type="project" value="InterPro"/>
</dbReference>
<dbReference type="GO" id="GO:0032438">
    <property type="term" value="P:melanosome organization"/>
    <property type="evidence" value="ECO:0000250"/>
    <property type="project" value="UniProtKB"/>
</dbReference>
<dbReference type="GO" id="GO:0033700">
    <property type="term" value="P:phospholipid efflux"/>
    <property type="evidence" value="ECO:0007669"/>
    <property type="project" value="TreeGrafter"/>
</dbReference>
<dbReference type="FunFam" id="1.20.120.20:FF:000002">
    <property type="entry name" value="Apolipoprotein E"/>
    <property type="match status" value="1"/>
</dbReference>
<dbReference type="FunFam" id="1.20.120.20:FF:000003">
    <property type="entry name" value="Apolipoprotein E"/>
    <property type="match status" value="1"/>
</dbReference>
<dbReference type="Gene3D" id="1.20.120.20">
    <property type="entry name" value="Apolipoprotein"/>
    <property type="match status" value="2"/>
</dbReference>
<dbReference type="InterPro" id="IPR000074">
    <property type="entry name" value="ApoA_E"/>
</dbReference>
<dbReference type="InterPro" id="IPR050163">
    <property type="entry name" value="Apolipoprotein_A1/A4/E"/>
</dbReference>
<dbReference type="PANTHER" id="PTHR18976">
    <property type="entry name" value="APOLIPOPROTEIN"/>
    <property type="match status" value="1"/>
</dbReference>
<dbReference type="PANTHER" id="PTHR18976:SF2">
    <property type="entry name" value="APOLIPOPROTEIN E"/>
    <property type="match status" value="1"/>
</dbReference>
<dbReference type="Pfam" id="PF01442">
    <property type="entry name" value="Apolipoprotein"/>
    <property type="match status" value="1"/>
</dbReference>
<dbReference type="SUPFAM" id="SSF58113">
    <property type="entry name" value="Apolipoprotein A-I"/>
    <property type="match status" value="1"/>
</dbReference>
<reference key="1">
    <citation type="submission" date="2018-02" db="EMBL/GenBank/DDBJ databases">
        <title>The 200 mammals project: sequencing genomes by a novel cost-effective method, yielding a high resolution annotation of the human genome.</title>
        <authorList>
            <person name="Johnson J."/>
            <person name="Muren E."/>
            <person name="Swofford R."/>
            <person name="Turner-Maier J."/>
            <person name="Marinescu V."/>
            <person name="Genereux D."/>
            <person name="Birren B."/>
            <person name="Karlsson E.K."/>
            <person name="Lindblad-Toh K."/>
        </authorList>
    </citation>
    <scope>NUCLEOTIDE SEQUENCE [LARGE SCALE GENOMIC DNA]</scope>
</reference>
<reference key="2">
    <citation type="unpublished observations" date="2021-07">
        <authorList>
            <person name="Puppione D.L."/>
        </authorList>
    </citation>
    <scope>IDENTIFICATION</scope>
</reference>
<protein>
    <recommendedName>
        <fullName>Apolipoprotein E</fullName>
        <shortName>Apo-E</shortName>
    </recommendedName>
</protein>
<proteinExistence type="inferred from homology"/>
<comment type="function">
    <text evidence="1">APOE is an apolipoprotein, a protein associating with lipid particles, that mainly functions in lipoprotein-mediated lipid transport between organs via the plasma and interstitial fluids. APOE is a core component of plasma lipoproteins and is involved in their production, conversion and clearance. Apolipoproteins are amphipathic molecules that interact both with lipids of the lipoprotein particle core and the aqueous environment of the plasma. As such, APOE associates with chylomicrons, chylomicron remnants, very low density lipoproteins (VLDL) and intermediate density lipoproteins (IDL) but shows a preferential binding to high-density lipoproteins (HDL). It also binds a wide range of cellular receptors including the LDL receptor/LDLR, the LDL receptor-related proteins LRP1, LRP2 and LRP8 and the very low-density lipoprotein receptor/VLDLR that mediate the cellular uptake of the APOE-containing lipoprotein particles. Finally, APOE also has a heparin-binding activity and binds heparan-sulfate proteoglycans on the surface of cells, a property that supports the capture and the receptor-mediated uptake of APOE-containing lipoproteins by cells. A main function of APOE is to mediate lipoprotein clearance through the uptake of chylomicrons, VLDLs, and HDLs by hepatocytes. APOE is also involved in the biosynthesis by the liver of VLDLs as well as their uptake by peripheral tissues ensuring the delivery of triglycerides and energy storage in muscle, heart and adipose tissues. By participating in the lipoprotein-mediated distribution of lipids among tissues, APOE plays a critical role in plasma and tissues lipid homeostasis. APOE is also involved in two steps of reverse cholesterol transport, the HDLs-mediated transport of cholesterol from peripheral tissues to the liver, and thereby plays an important role in cholesterol homeostasis. First, it is functionally associated with ABCA1 in the biogenesis of HDLs in tissues. Second, it is enriched in circulating HDLs and mediates their uptake by hepatocytes. APOE also plays an important role in lipid transport in the central nervous system, regulating neuron survival and sprouting.</text>
</comment>
<comment type="subunit">
    <text evidence="1">Homotetramer. May interact with ABCA1; functionally associated with ABCA1 in the biogenesis of HDLs. May interact with APP/A4 amyloid-beta peptide; the interaction is extremely stable in vitro but its physiological significance is unclear. May interact with MAPT. May interact with MAP2. In the cerebrospinal fluid, interacts with secreted SORL1. Interacts with PMEL; this allows the loading of PMEL luminal fragment on ILVs to induce fibril nucleation.</text>
</comment>
<comment type="subcellular location">
    <subcellularLocation>
        <location evidence="1">Secreted</location>
    </subcellularLocation>
    <subcellularLocation>
        <location evidence="1">Secreted</location>
        <location evidence="1">Extracellular space</location>
    </subcellularLocation>
    <subcellularLocation>
        <location evidence="1">Secreted</location>
        <location evidence="1">Extracellular space</location>
        <location evidence="1">Extracellular matrix</location>
    </subcellularLocation>
    <subcellularLocation>
        <location evidence="1">Extracellular vesicle</location>
    </subcellularLocation>
    <subcellularLocation>
        <location evidence="1">Endosome</location>
        <location evidence="1">Multivesicular body</location>
    </subcellularLocation>
    <text evidence="1">In the plasma, APOE is associated with chylomicrons, chylomicrons remnants, VLDL, LDL and HDL lipoproteins. Lipid poor oligomeric APOE is associated with the extracellular matrix in a calcium- and heparan-sulfate proteoglycans-dependent manner. Lipidation induces the release from the extracellular matrix. Colocalizes with CD63 and PMEL at exosomes and in intraluminal vesicles within multivesicular endosomes.</text>
</comment>
<comment type="PTM">
    <text evidence="1">APOE exists as multiple glycosylated and sialylated glycoforms within cells and in plasma. The extent of glycosylation and sialylation are tissue and context specific.</text>
</comment>
<comment type="PTM">
    <text evidence="1">Glycated in plasma VLDL.</text>
</comment>
<comment type="PTM">
    <text evidence="1">Phosphorylated by FAM20C in the extracellular medium.</text>
</comment>
<comment type="similarity">
    <text evidence="4">Belongs to the apolipoprotein A1/A4/E family.</text>
</comment>
<feature type="signal peptide" evidence="3">
    <location>
        <begin position="1"/>
        <end position="18"/>
    </location>
</feature>
<feature type="chain" id="PRO_0000454016" description="Apolipoprotein E">
    <location>
        <begin position="19"/>
        <end position="306"/>
    </location>
</feature>
<feature type="repeat" description="1">
    <location>
        <begin position="81"/>
        <end position="102"/>
    </location>
</feature>
<feature type="repeat" description="2">
    <location>
        <begin position="103"/>
        <end position="124"/>
    </location>
</feature>
<feature type="repeat" description="3">
    <location>
        <begin position="125"/>
        <end position="146"/>
    </location>
</feature>
<feature type="repeat" description="4">
    <location>
        <begin position="147"/>
        <end position="168"/>
    </location>
</feature>
<feature type="repeat" description="5">
    <location>
        <begin position="169"/>
        <end position="190"/>
    </location>
</feature>
<feature type="repeat" description="6">
    <location>
        <begin position="191"/>
        <end position="212"/>
    </location>
</feature>
<feature type="repeat" description="7">
    <location>
        <begin position="213"/>
        <end position="230"/>
    </location>
</feature>
<feature type="repeat" description="8">
    <location>
        <begin position="231"/>
        <end position="252"/>
    </location>
</feature>
<feature type="region of interest" description="8 X 22 AA approximate tandem repeats">
    <location>
        <begin position="81"/>
        <end position="252"/>
    </location>
</feature>
<feature type="region of interest" description="LDL and other lipoprotein receptors binding" evidence="1">
    <location>
        <begin position="159"/>
        <end position="169"/>
    </location>
</feature>
<feature type="region of interest" description="Lipid-binding and lipoprotein association" evidence="1">
    <location>
        <begin position="211"/>
        <end position="280"/>
    </location>
</feature>
<feature type="region of interest" description="Specificity for association with VLDL" evidence="1">
    <location>
        <begin position="268"/>
        <end position="280"/>
    </location>
</feature>
<feature type="binding site" evidence="1">
    <location>
        <begin position="163"/>
        <end position="166"/>
    </location>
    <ligand>
        <name>heparin</name>
        <dbReference type="ChEBI" id="CHEBI:28304"/>
    </ligand>
</feature>
<feature type="binding site" evidence="1">
    <location>
        <begin position="226"/>
        <end position="233"/>
    </location>
    <ligand>
        <name>heparin</name>
        <dbReference type="ChEBI" id="CHEBI:28304"/>
    </ligand>
</feature>
<feature type="modified residue" description="Methionine sulfoxide" evidence="2">
    <location>
        <position position="144"/>
    </location>
</feature>
<feature type="modified residue" description="Phosphoserine" evidence="1">
    <location>
        <position position="148"/>
    </location>
</feature>
<gene>
    <name type="primary">APOE</name>
</gene>
<keyword id="KW-0162">Chylomicron</keyword>
<keyword id="KW-0967">Endosome</keyword>
<keyword id="KW-0272">Extracellular matrix</keyword>
<keyword id="KW-0325">Glycoprotein</keyword>
<keyword id="KW-0345">HDL</keyword>
<keyword id="KW-0358">Heparin-binding</keyword>
<keyword id="KW-0445">Lipid transport</keyword>
<keyword id="KW-0446">Lipid-binding</keyword>
<keyword id="KW-0558">Oxidation</keyword>
<keyword id="KW-0597">Phosphoprotein</keyword>
<keyword id="KW-0677">Repeat</keyword>
<keyword id="KW-0964">Secreted</keyword>
<keyword id="KW-0732">Signal</keyword>
<keyword id="KW-0813">Transport</keyword>
<keyword id="KW-0850">VLDL</keyword>
<evidence type="ECO:0000250" key="1">
    <source>
        <dbReference type="UniProtKB" id="P02649"/>
    </source>
</evidence>
<evidence type="ECO:0000250" key="2">
    <source>
        <dbReference type="UniProtKB" id="P08226"/>
    </source>
</evidence>
<evidence type="ECO:0000255" key="3"/>
<evidence type="ECO:0000305" key="4"/>
<sequence length="306" mass="34835">MKVLWAVLVVTLLAGCQADVEPALEVGEPAPEVREPAMWQSGQPWELALGRFWDYLRWVQTLSDQVQEELLSSQVTQELTVLMEDTMKEVKAYKSELEQELGPMAEDTKARLSKELQAAQARLGADMEEVRNRLTQYRSEVQTMLGQSAEELRARLASHLRKLRKRLLRDAEDLQKRLAVYKAGAQEGAERGVSAIRERLGSLVEQGRLRAAQTSQPLRERAQAWGERLRGRLEEVGGQARDRLDVVREQMEEVRAKVEEQAEAFQARLKGWFEPVVEDMRRQWAELIEKVQVAVGASTPAPSEKH</sequence>
<name>APOE_HYSCR</name>
<accession>P0DUZ2</accession>
<organism>
    <name type="scientific">Hystrix cristata</name>
    <name type="common">North African crested porcupine</name>
    <dbReference type="NCBI Taxonomy" id="10137"/>
    <lineage>
        <taxon>Eukaryota</taxon>
        <taxon>Metazoa</taxon>
        <taxon>Chordata</taxon>
        <taxon>Craniata</taxon>
        <taxon>Vertebrata</taxon>
        <taxon>Euteleostomi</taxon>
        <taxon>Mammalia</taxon>
        <taxon>Eutheria</taxon>
        <taxon>Euarchontoglires</taxon>
        <taxon>Glires</taxon>
        <taxon>Rodentia</taxon>
        <taxon>Hystricomorpha</taxon>
        <taxon>Hystricidae</taxon>
        <taxon>Hystrix</taxon>
    </lineage>
</organism>